<reference key="1">
    <citation type="journal article" date="2005" name="Nature">
        <title>The map-based sequence of the rice genome.</title>
        <authorList>
            <consortium name="International rice genome sequencing project (IRGSP)"/>
        </authorList>
    </citation>
    <scope>NUCLEOTIDE SEQUENCE [LARGE SCALE GENOMIC DNA]</scope>
    <source>
        <strain>cv. Nipponbare</strain>
    </source>
</reference>
<reference key="2">
    <citation type="journal article" date="2008" name="Nucleic Acids Res.">
        <title>The rice annotation project database (RAP-DB): 2008 update.</title>
        <authorList>
            <consortium name="The rice annotation project (RAP)"/>
        </authorList>
    </citation>
    <scope>GENOME REANNOTATION</scope>
    <source>
        <strain>cv. Nipponbare</strain>
    </source>
</reference>
<reference key="3">
    <citation type="journal article" date="2013" name="Rice">
        <title>Improvement of the Oryza sativa Nipponbare reference genome using next generation sequence and optical map data.</title>
        <authorList>
            <person name="Kawahara Y."/>
            <person name="de la Bastide M."/>
            <person name="Hamilton J.P."/>
            <person name="Kanamori H."/>
            <person name="McCombie W.R."/>
            <person name="Ouyang S."/>
            <person name="Schwartz D.C."/>
            <person name="Tanaka T."/>
            <person name="Wu J."/>
            <person name="Zhou S."/>
            <person name="Childs K.L."/>
            <person name="Davidson R.M."/>
            <person name="Lin H."/>
            <person name="Quesada-Ocampo L."/>
            <person name="Vaillancourt B."/>
            <person name="Sakai H."/>
            <person name="Lee S.S."/>
            <person name="Kim J."/>
            <person name="Numa H."/>
            <person name="Itoh T."/>
            <person name="Buell C.R."/>
            <person name="Matsumoto T."/>
        </authorList>
    </citation>
    <scope>GENOME REANNOTATION</scope>
    <source>
        <strain>cv. Nipponbare</strain>
    </source>
</reference>
<reference key="4">
    <citation type="journal article" date="2014" name="J. Integr. Plant Biol.">
        <title>Rice CYP703A3, a cytochrome P450 hydroxylase, is essential for development of anther cuticle and pollen exine.</title>
        <authorList>
            <person name="Yang X."/>
            <person name="Wu D."/>
            <person name="Shi J."/>
            <person name="He Y."/>
            <person name="Pinot F."/>
            <person name="Grausem B."/>
            <person name="Yin C."/>
            <person name="Zhu L."/>
            <person name="Chen M."/>
            <person name="Luo Z."/>
            <person name="Liang W."/>
            <person name="Zhang D."/>
        </authorList>
    </citation>
    <scope>FUNCTION</scope>
    <scope>CATALYTIC ACTIVITY</scope>
    <scope>DEVELOPMENTAL STAGE</scope>
    <scope>DISRUPTION PHENOTYPE</scope>
</reference>
<keyword id="KW-0349">Heme</keyword>
<keyword id="KW-0408">Iron</keyword>
<keyword id="KW-0472">Membrane</keyword>
<keyword id="KW-0479">Metal-binding</keyword>
<keyword id="KW-0503">Monooxygenase</keyword>
<keyword id="KW-0560">Oxidoreductase</keyword>
<keyword id="KW-1185">Reference proteome</keyword>
<keyword id="KW-0812">Transmembrane</keyword>
<keyword id="KW-1133">Transmembrane helix</keyword>
<organism>
    <name type="scientific">Oryza sativa subsp. japonica</name>
    <name type="common">Rice</name>
    <dbReference type="NCBI Taxonomy" id="39947"/>
    <lineage>
        <taxon>Eukaryota</taxon>
        <taxon>Viridiplantae</taxon>
        <taxon>Streptophyta</taxon>
        <taxon>Embryophyta</taxon>
        <taxon>Tracheophyta</taxon>
        <taxon>Spermatophyta</taxon>
        <taxon>Magnoliopsida</taxon>
        <taxon>Liliopsida</taxon>
        <taxon>Poales</taxon>
        <taxon>Poaceae</taxon>
        <taxon>BOP clade</taxon>
        <taxon>Oryzoideae</taxon>
        <taxon>Oryzeae</taxon>
        <taxon>Oryzinae</taxon>
        <taxon>Oryza</taxon>
        <taxon>Oryza sativa</taxon>
    </lineage>
</organism>
<protein>
    <recommendedName>
        <fullName evidence="4">Cytochrome P450 703A2</fullName>
        <ecNumber evidence="3">1.14.14.130</ecNumber>
    </recommendedName>
    <alternativeName>
        <fullName evidence="5">Laurate 7-monooxygenase</fullName>
    </alternativeName>
</protein>
<feature type="chain" id="PRO_0000439819" description="Cytochrome P450 703A2">
    <location>
        <begin position="1"/>
        <end position="525"/>
    </location>
</feature>
<feature type="transmembrane region" description="Helical" evidence="2">
    <location>
        <begin position="3"/>
        <end position="23"/>
    </location>
</feature>
<feature type="binding site" description="axial binding residue" evidence="1">
    <location>
        <position position="455"/>
    </location>
    <ligand>
        <name>heme</name>
        <dbReference type="ChEBI" id="CHEBI:30413"/>
    </ligand>
    <ligandPart>
        <name>Fe</name>
        <dbReference type="ChEBI" id="CHEBI:18248"/>
    </ligandPart>
</feature>
<gene>
    <name evidence="4" type="primary">CYP703A3</name>
    <name evidence="8" type="ordered locus">Os08g0131100</name>
    <name evidence="5" type="ordered locus">LOC_Os08g03682</name>
    <name evidence="7" type="ORF">OSJNBb0009H02.9</name>
    <name evidence="6" type="ORF">P0582D05.139</name>
</gene>
<proteinExistence type="evidence at protein level"/>
<evidence type="ECO:0000250" key="1"/>
<evidence type="ECO:0000255" key="2"/>
<evidence type="ECO:0000269" key="3">
    <source>
    </source>
</evidence>
<evidence type="ECO:0000303" key="4">
    <source>
    </source>
</evidence>
<evidence type="ECO:0000305" key="5"/>
<evidence type="ECO:0000312" key="6">
    <source>
        <dbReference type="EMBL" id="BAD09645.1"/>
    </source>
</evidence>
<evidence type="ECO:0000312" key="7">
    <source>
        <dbReference type="EMBL" id="BAD33366.1"/>
    </source>
</evidence>
<evidence type="ECO:0000312" key="8">
    <source>
        <dbReference type="EMBL" id="BAF22841.1"/>
    </source>
</evidence>
<name>C70A3_ORYSJ</name>
<dbReference type="EC" id="1.14.14.130" evidence="3"/>
<dbReference type="EMBL" id="AP004591">
    <property type="protein sequence ID" value="BAD09645.1"/>
    <property type="molecule type" value="Genomic_DNA"/>
</dbReference>
<dbReference type="EMBL" id="AP005250">
    <property type="protein sequence ID" value="BAD33366.1"/>
    <property type="molecule type" value="Genomic_DNA"/>
</dbReference>
<dbReference type="EMBL" id="AP008214">
    <property type="protein sequence ID" value="BAF22841.1"/>
    <property type="molecule type" value="Genomic_DNA"/>
</dbReference>
<dbReference type="EMBL" id="AP014964">
    <property type="protein sequence ID" value="BAT03702.1"/>
    <property type="molecule type" value="Genomic_DNA"/>
</dbReference>
<dbReference type="RefSeq" id="XP_015648492.1">
    <property type="nucleotide sequence ID" value="XM_015793006.1"/>
</dbReference>
<dbReference type="SMR" id="Q7EZR4"/>
<dbReference type="FunCoup" id="Q7EZR4">
    <property type="interactions" value="495"/>
</dbReference>
<dbReference type="STRING" id="39947.Q7EZR4"/>
<dbReference type="PaxDb" id="39947-Q7EZR4"/>
<dbReference type="EnsemblPlants" id="Os08t0131100-01">
    <property type="protein sequence ID" value="Os08t0131100-01"/>
    <property type="gene ID" value="Os08g0131100"/>
</dbReference>
<dbReference type="Gramene" id="Os08t0131100-01">
    <property type="protein sequence ID" value="Os08t0131100-01"/>
    <property type="gene ID" value="Os08g0131100"/>
</dbReference>
<dbReference type="KEGG" id="dosa:Os08g0131100"/>
<dbReference type="eggNOG" id="KOG0156">
    <property type="taxonomic scope" value="Eukaryota"/>
</dbReference>
<dbReference type="HOGENOM" id="CLU_001570_4_0_1"/>
<dbReference type="InParanoid" id="Q7EZR4"/>
<dbReference type="OMA" id="GPQEAME"/>
<dbReference type="OrthoDB" id="2789670at2759"/>
<dbReference type="Proteomes" id="UP000000763">
    <property type="component" value="Chromosome 8"/>
</dbReference>
<dbReference type="Proteomes" id="UP000059680">
    <property type="component" value="Chromosome 8"/>
</dbReference>
<dbReference type="GO" id="GO:0016020">
    <property type="term" value="C:membrane"/>
    <property type="evidence" value="ECO:0007669"/>
    <property type="project" value="UniProtKB-SubCell"/>
</dbReference>
<dbReference type="GO" id="GO:0052722">
    <property type="term" value="F:fatty acid in-chain hydroxylase activity"/>
    <property type="evidence" value="ECO:0000314"/>
    <property type="project" value="UniProtKB"/>
</dbReference>
<dbReference type="GO" id="GO:0020037">
    <property type="term" value="F:heme binding"/>
    <property type="evidence" value="ECO:0007669"/>
    <property type="project" value="InterPro"/>
</dbReference>
<dbReference type="GO" id="GO:0005506">
    <property type="term" value="F:iron ion binding"/>
    <property type="evidence" value="ECO:0007669"/>
    <property type="project" value="InterPro"/>
</dbReference>
<dbReference type="GO" id="GO:0016709">
    <property type="term" value="F:oxidoreductase activity, acting on paired donors, with incorporation or reduction of molecular oxygen, NAD(P)H as one donor, and incorporation of one atom of oxygen"/>
    <property type="evidence" value="ECO:0007669"/>
    <property type="project" value="EnsemblPlants"/>
</dbReference>
<dbReference type="GO" id="GO:0048653">
    <property type="term" value="P:anther development"/>
    <property type="evidence" value="ECO:0000315"/>
    <property type="project" value="UniProtKB"/>
</dbReference>
<dbReference type="GO" id="GO:0002933">
    <property type="term" value="P:lipid hydroxylation"/>
    <property type="evidence" value="ECO:0000314"/>
    <property type="project" value="UniProtKB"/>
</dbReference>
<dbReference type="GO" id="GO:0051792">
    <property type="term" value="P:medium-chain fatty acid biosynthetic process"/>
    <property type="evidence" value="ECO:0007669"/>
    <property type="project" value="EnsemblPlants"/>
</dbReference>
<dbReference type="GO" id="GO:0010584">
    <property type="term" value="P:pollen exine formation"/>
    <property type="evidence" value="ECO:0000315"/>
    <property type="project" value="UniProtKB"/>
</dbReference>
<dbReference type="GO" id="GO:0080110">
    <property type="term" value="P:sporopollenin biosynthetic process"/>
    <property type="evidence" value="ECO:0007669"/>
    <property type="project" value="EnsemblPlants"/>
</dbReference>
<dbReference type="CDD" id="cd20618">
    <property type="entry name" value="CYP71_clan"/>
    <property type="match status" value="1"/>
</dbReference>
<dbReference type="FunFam" id="1.10.630.10:FF:000071">
    <property type="entry name" value="Cytochrome P450 703A2"/>
    <property type="match status" value="1"/>
</dbReference>
<dbReference type="Gene3D" id="1.10.630.10">
    <property type="entry name" value="Cytochrome P450"/>
    <property type="match status" value="1"/>
</dbReference>
<dbReference type="InterPro" id="IPR001128">
    <property type="entry name" value="Cyt_P450"/>
</dbReference>
<dbReference type="InterPro" id="IPR017972">
    <property type="entry name" value="Cyt_P450_CS"/>
</dbReference>
<dbReference type="InterPro" id="IPR002401">
    <property type="entry name" value="Cyt_P450_E_grp-I"/>
</dbReference>
<dbReference type="InterPro" id="IPR036396">
    <property type="entry name" value="Cyt_P450_sf"/>
</dbReference>
<dbReference type="PANTHER" id="PTHR47944">
    <property type="entry name" value="CYTOCHROME P450 98A9"/>
    <property type="match status" value="1"/>
</dbReference>
<dbReference type="PANTHER" id="PTHR47944:SF16">
    <property type="entry name" value="CYTOCHROME P450 FAMILY 1 SUBFAMILY A POLYPEPTIDE 1"/>
    <property type="match status" value="1"/>
</dbReference>
<dbReference type="Pfam" id="PF00067">
    <property type="entry name" value="p450"/>
    <property type="match status" value="1"/>
</dbReference>
<dbReference type="PRINTS" id="PR00463">
    <property type="entry name" value="EP450I"/>
</dbReference>
<dbReference type="PRINTS" id="PR00385">
    <property type="entry name" value="P450"/>
</dbReference>
<dbReference type="SUPFAM" id="SSF48264">
    <property type="entry name" value="Cytochrome P450"/>
    <property type="match status" value="1"/>
</dbReference>
<dbReference type="PROSITE" id="PS00086">
    <property type="entry name" value="CYTOCHROME_P450"/>
    <property type="match status" value="1"/>
</dbReference>
<accession>Q7EZR4</accession>
<comment type="function">
    <text evidence="3">Involved in pollen exine and anther epicuticular layer development. Catalyzes the in-chain hydroxylation of lauric acid (C12:0) preferentially on position 7, generating 7-hydroxylated lauric acid. Does not possess activity with other fatty acids (C14:0, C16:0, C16:1, and C18:0). Participates in a conserved pathway of in-chain hydroxylation of lauric acid required for anther cuticle and pollen exine formation. Directly regulated by TDR, a known regulator of tapetum programmed cell death (PCD) and pollen exine formation.</text>
</comment>
<comment type="catalytic activity">
    <reaction evidence="3">
        <text>dodecanoate + reduced [NADPH--hemoprotein reductase] + O2 = 7-hydroxydodecanoate + oxidized [NADPH--hemoprotein reductase] + H2O + H(+)</text>
        <dbReference type="Rhea" id="RHEA:45084"/>
        <dbReference type="Rhea" id="RHEA-COMP:11964"/>
        <dbReference type="Rhea" id="RHEA-COMP:11965"/>
        <dbReference type="ChEBI" id="CHEBI:15377"/>
        <dbReference type="ChEBI" id="CHEBI:15378"/>
        <dbReference type="ChEBI" id="CHEBI:15379"/>
        <dbReference type="ChEBI" id="CHEBI:18262"/>
        <dbReference type="ChEBI" id="CHEBI:57618"/>
        <dbReference type="ChEBI" id="CHEBI:58210"/>
        <dbReference type="ChEBI" id="CHEBI:84921"/>
        <dbReference type="EC" id="1.14.14.130"/>
    </reaction>
</comment>
<comment type="cofactor">
    <cofactor evidence="1">
        <name>heme</name>
        <dbReference type="ChEBI" id="CHEBI:30413"/>
    </cofactor>
</comment>
<comment type="subcellular location">
    <subcellularLocation>
        <location evidence="2">Membrane</location>
        <topology evidence="2">Single-pass membrane protein</topology>
    </subcellularLocation>
</comment>
<comment type="developmental stage">
    <text>Expressed in anthers of developing flowers during meiosis, tapetal cell death stage and microspore stage.</text>
</comment>
<comment type="disruption phenotype">
    <text evidence="3">Male sterile. Defective in pollen exine and anther epicuticular layer development.</text>
</comment>
<comment type="similarity">
    <text evidence="5">Belongs to the cytochrome P450 family.</text>
</comment>
<sequence>MDPFLLSIILCSWIFVVVSWKKLNCMRRRLPPGPPRWPIFGNLLQLSPLPHKDFARFCTKYGPLVYLRLGTIDAITTDDPEVIREILIRQDEVFASRPRTLAAVHLAYGCGDVALAPLGPNWKRMRRVCMEHLLTTKRLESFAAHRALEAEHLCQFVWAKAQSGKPVNLREVLGAFSMNNVTRMLLGKQYFGLQSAGPGEAMEFMHITHELFWLLGLIYLGDYLPAWRWLDPYGCEKKMREVEKKVDDFHQKIIDEHRKAREAKKSASLDDDNKEDMDFVDVLLSLPGENGKEHMDDVEIKALMQDMIAAATDTSSVTNEWVMAEVIKNPRVLRKIQEELDGVVGRGRMVAESDLGQLTYLRCVVRESFRMHPAGPFLIPHESLKPTTIMGYDIPARTRIFINTHALGRNTRIWDDVDAFRPERHLPASADGGRVEISHLPDFKILPFSAGKRKCPGAPLGVILVLMALARLFHCFDWSPPDGLRPDDIDTQEVYGMTMPKAKPLVAVATPRLPPQMYGRHGKQV</sequence>